<organism>
    <name type="scientific">Rattus norvegicus</name>
    <name type="common">Rat</name>
    <dbReference type="NCBI Taxonomy" id="10116"/>
    <lineage>
        <taxon>Eukaryota</taxon>
        <taxon>Metazoa</taxon>
        <taxon>Chordata</taxon>
        <taxon>Craniata</taxon>
        <taxon>Vertebrata</taxon>
        <taxon>Euteleostomi</taxon>
        <taxon>Mammalia</taxon>
        <taxon>Eutheria</taxon>
        <taxon>Euarchontoglires</taxon>
        <taxon>Glires</taxon>
        <taxon>Rodentia</taxon>
        <taxon>Myomorpha</taxon>
        <taxon>Muroidea</taxon>
        <taxon>Muridae</taxon>
        <taxon>Murinae</taxon>
        <taxon>Rattus</taxon>
    </lineage>
</organism>
<reference key="1">
    <citation type="submission" date="2002-07" db="EMBL/GenBank/DDBJ databases">
        <authorList>
            <person name="Isogai T."/>
            <person name="Yamamoto J."/>
        </authorList>
    </citation>
    <scope>NUCLEOTIDE SEQUENCE [MRNA]</scope>
    <source>
        <tissue>Trachea</tissue>
    </source>
</reference>
<reference key="2">
    <citation type="journal article" date="2004" name="Nat. Genet.">
        <title>Mutations in HFE2 cause iron overload in chromosome 1q-linked juvenile hemochromatosis.</title>
        <authorList>
            <person name="Papanikolaou G."/>
            <person name="Samuels M.E."/>
            <person name="Ludwig E.H."/>
            <person name="MacDonald M.L.E."/>
            <person name="Franchini P.L."/>
            <person name="Dube M.-P."/>
            <person name="Andres L."/>
            <person name="MacFarlane J."/>
            <person name="Sakellaropoulos N."/>
            <person name="Politou M."/>
            <person name="Nemeth E."/>
            <person name="Thompson J."/>
            <person name="Risler J.K."/>
            <person name="Zaborowska C."/>
            <person name="Babakaiff R."/>
            <person name="Radomski C.C."/>
            <person name="Pape T.D."/>
            <person name="Davidas O."/>
            <person name="Christakis J."/>
            <person name="Brissot P."/>
            <person name="Lockitch G."/>
            <person name="Ganz T."/>
            <person name="Hayden M.R."/>
            <person name="Goldberg Y.P."/>
        </authorList>
    </citation>
    <scope>SHOWS THAT SEQUENCE DESCRIBED BY ISOGAI ET AL ORIGINATE FROM RAT</scope>
</reference>
<evidence type="ECO:0000250" key="1"/>
<evidence type="ECO:0000250" key="2">
    <source>
        <dbReference type="UniProtKB" id="Q6ZVN8"/>
    </source>
</evidence>
<evidence type="ECO:0000250" key="3">
    <source>
        <dbReference type="UniProtKB" id="Q7TQ32"/>
    </source>
</evidence>
<evidence type="ECO:0000255" key="4"/>
<evidence type="ECO:0000256" key="5">
    <source>
        <dbReference type="SAM" id="MobiDB-lite"/>
    </source>
</evidence>
<evidence type="ECO:0000305" key="6"/>
<evidence type="ECO:0000312" key="7">
    <source>
        <dbReference type="RGD" id="1310195"/>
    </source>
</evidence>
<protein>
    <recommendedName>
        <fullName evidence="6">Hemojuvelin</fullName>
    </recommendedName>
    <alternativeName>
        <fullName>Hemochromatosis type 2 protein homolog</fullName>
    </alternativeName>
    <alternativeName>
        <fullName evidence="6">Hemojuvelin BMP coreceptor</fullName>
    </alternativeName>
    <alternativeName>
        <fullName>RGM domain family member C</fullName>
    </alternativeName>
</protein>
<sequence length="422" mass="45221">MGDRGRSPSLRSPHGSPPTLSTLTLLLLLCGQAHSQCKILRCNAEYVSFTLSLRGGGSPDTPRGGGRGGPASGGLCRALRSYALCTRRTARTCRGDLAFHSAVHGIEDLMIQHNCSRQGPTASPPARGPALPGAGPAPLTPDPCDYEARFSRLHGRTPGFLHCASFGDPHVRSFHNHFHTCRVQGAWPLLDNDFLFVQATSSPVASGANATTIRKITIIFKNMQECIDQKVYQAEVDNLPAAFEDGSVNGGDRPGGSSLSIQTANLGSHVEIRAAYIGTTIIVRQTAGQLSFSIRVAEDVARAFSAEQDLQLCVGGCPPSQRLSRSERNRRGAIAIDTARRLCKEGLPVEDAYFQSCVFDVSVSGDPNFTVAAQSALDDARVFLTDLENLHLFPVDAGPPLSPATCLVRLLSVLFVLWFCIQ</sequence>
<proteinExistence type="evidence at transcript level"/>
<keyword id="KW-0068">Autocatalytic cleavage</keyword>
<keyword id="KW-1003">Cell membrane</keyword>
<keyword id="KW-1015">Disulfide bond</keyword>
<keyword id="KW-0325">Glycoprotein</keyword>
<keyword id="KW-0336">GPI-anchor</keyword>
<keyword id="KW-0449">Lipoprotein</keyword>
<keyword id="KW-0472">Membrane</keyword>
<keyword id="KW-0597">Phosphoprotein</keyword>
<keyword id="KW-1185">Reference proteome</keyword>
<keyword id="KW-0732">Signal</keyword>
<feature type="signal peptide" evidence="4">
    <location>
        <begin position="1"/>
        <end position="35"/>
    </location>
</feature>
<feature type="chain" id="PRO_0000030402" description="Hemojuvelin">
    <location>
        <begin position="36"/>
        <end position="396"/>
    </location>
</feature>
<feature type="propeptide" id="PRO_0000030403" description="Removed in mature form" evidence="4">
    <location>
        <begin position="397"/>
        <end position="422"/>
    </location>
</feature>
<feature type="region of interest" description="Disordered" evidence="5">
    <location>
        <begin position="116"/>
        <end position="138"/>
    </location>
</feature>
<feature type="compositionally biased region" description="Low complexity" evidence="5">
    <location>
        <begin position="128"/>
        <end position="137"/>
    </location>
</feature>
<feature type="site" description="Cleavage; by autolysis" evidence="1">
    <location>
        <begin position="168"/>
        <end position="169"/>
    </location>
</feature>
<feature type="modified residue" description="Phosphotyrosine" evidence="3">
    <location>
        <position position="46"/>
    </location>
</feature>
<feature type="lipid moiety-binding region" description="GPI-anchor amidated aspartate" evidence="4">
    <location>
        <position position="396"/>
    </location>
</feature>
<feature type="glycosylation site" description="N-linked (GlcNAc...) asparagine" evidence="4">
    <location>
        <position position="114"/>
    </location>
</feature>
<feature type="glycosylation site" description="N-linked (GlcNAc...) asparagine" evidence="4">
    <location>
        <position position="209"/>
    </location>
</feature>
<feature type="glycosylation site" description="N-linked (GlcNAc...) asparagine" evidence="4">
    <location>
        <position position="368"/>
    </location>
</feature>
<feature type="disulfide bond" evidence="1">
    <location>
        <begin position="144"/>
        <end position="226"/>
    </location>
</feature>
<feature type="disulfide bond" evidence="1">
    <location>
        <begin position="163"/>
        <end position="313"/>
    </location>
</feature>
<comment type="function">
    <text evidence="3">Acts as a bone morphogenetic protein (BMP) coreceptor. Through enhancement of BMP signaling regulates hepcidin (HAMP) expression and regulates iron homeostasis.</text>
</comment>
<comment type="subunit">
    <text evidence="2 3">Interacts with BMP2 and BMP4 (By similarity). Interacts with BMP6 (By similarity). Interacts with BMPR1B. Interacts with TMPRSS6 (By similarity).</text>
</comment>
<comment type="subcellular location">
    <subcellularLocation>
        <location evidence="1">Cell membrane</location>
        <topology evidence="1">Lipid-anchor</topology>
        <topology evidence="1">GPI-anchor</topology>
    </subcellularLocation>
    <text evidence="2">Also released in the extracellular space.</text>
</comment>
<comment type="PTM">
    <text evidence="2">Autocatalytically cleaved at low pH; the two chains remain linked via two disulfide bonds. Also proteolytically processed by TMPRSS6, several fragments being released in the extracellular space; regulates HJV activity in BMP signaling and thefore iron homeostasis.</text>
</comment>
<comment type="similarity">
    <text evidence="6">Belongs to the repulsive guidance molecule (RGM) family.</text>
</comment>
<comment type="caution">
    <text evidence="6">Was originally (Ref.1) thought to originate from human.</text>
</comment>
<name>RGMC_RAT</name>
<gene>
    <name evidence="7" type="primary">Hjv</name>
    <name type="synonym">Hfe2</name>
    <name type="synonym">Rgmc</name>
</gene>
<dbReference type="EMBL" id="AK098165">
    <property type="protein sequence ID" value="BAC05248.1"/>
    <property type="molecule type" value="mRNA"/>
</dbReference>
<dbReference type="SMR" id="Q8N7M5"/>
<dbReference type="FunCoup" id="Q8N7M5">
    <property type="interactions" value="6"/>
</dbReference>
<dbReference type="STRING" id="10116.ENSRNOP00000028781"/>
<dbReference type="GlyCosmos" id="Q8N7M5">
    <property type="glycosylation" value="3 sites, No reported glycans"/>
</dbReference>
<dbReference type="GlyGen" id="Q8N7M5">
    <property type="glycosylation" value="4 sites"/>
</dbReference>
<dbReference type="PhosphoSitePlus" id="Q8N7M5"/>
<dbReference type="PaxDb" id="10116-ENSRNOP00000028781"/>
<dbReference type="UCSC" id="RGD:1310195">
    <property type="organism name" value="rat"/>
</dbReference>
<dbReference type="AGR" id="RGD:1310195"/>
<dbReference type="RGD" id="1310195">
    <property type="gene designation" value="Hjv"/>
</dbReference>
<dbReference type="eggNOG" id="ENOG502QWAZ">
    <property type="taxonomic scope" value="Eukaryota"/>
</dbReference>
<dbReference type="InParanoid" id="Q8N7M5"/>
<dbReference type="PhylomeDB" id="Q8N7M5"/>
<dbReference type="PRO" id="PR:Q8N7M5"/>
<dbReference type="Proteomes" id="UP000002494">
    <property type="component" value="Unplaced"/>
</dbReference>
<dbReference type="GO" id="GO:0016323">
    <property type="term" value="C:basolateral plasma membrane"/>
    <property type="evidence" value="ECO:0000314"/>
    <property type="project" value="RGD"/>
</dbReference>
<dbReference type="GO" id="GO:0070724">
    <property type="term" value="C:BMP receptor complex"/>
    <property type="evidence" value="ECO:0000266"/>
    <property type="project" value="RGD"/>
</dbReference>
<dbReference type="GO" id="GO:0009986">
    <property type="term" value="C:cell surface"/>
    <property type="evidence" value="ECO:0000266"/>
    <property type="project" value="RGD"/>
</dbReference>
<dbReference type="GO" id="GO:0005615">
    <property type="term" value="C:extracellular space"/>
    <property type="evidence" value="ECO:0000266"/>
    <property type="project" value="RGD"/>
</dbReference>
<dbReference type="GO" id="GO:1990712">
    <property type="term" value="C:HFE-transferrin receptor complex"/>
    <property type="evidence" value="ECO:0000266"/>
    <property type="project" value="RGD"/>
</dbReference>
<dbReference type="GO" id="GO:0005886">
    <property type="term" value="C:plasma membrane"/>
    <property type="evidence" value="ECO:0000266"/>
    <property type="project" value="RGD"/>
</dbReference>
<dbReference type="GO" id="GO:0098797">
    <property type="term" value="C:plasma membrane protein complex"/>
    <property type="evidence" value="ECO:0000266"/>
    <property type="project" value="RGD"/>
</dbReference>
<dbReference type="GO" id="GO:0098552">
    <property type="term" value="C:side of membrane"/>
    <property type="evidence" value="ECO:0007669"/>
    <property type="project" value="UniProtKB-KW"/>
</dbReference>
<dbReference type="GO" id="GO:0036122">
    <property type="term" value="F:BMP binding"/>
    <property type="evidence" value="ECO:0000266"/>
    <property type="project" value="RGD"/>
</dbReference>
<dbReference type="GO" id="GO:0015026">
    <property type="term" value="F:coreceptor activity"/>
    <property type="evidence" value="ECO:0000266"/>
    <property type="project" value="RGD"/>
</dbReference>
<dbReference type="GO" id="GO:0005102">
    <property type="term" value="F:signaling receptor binding"/>
    <property type="evidence" value="ECO:0000266"/>
    <property type="project" value="RGD"/>
</dbReference>
<dbReference type="GO" id="GO:1990459">
    <property type="term" value="F:transferrin receptor binding"/>
    <property type="evidence" value="ECO:0000266"/>
    <property type="project" value="RGD"/>
</dbReference>
<dbReference type="GO" id="GO:0032924">
    <property type="term" value="P:activin receptor signaling pathway"/>
    <property type="evidence" value="ECO:0000266"/>
    <property type="project" value="RGD"/>
</dbReference>
<dbReference type="GO" id="GO:0030509">
    <property type="term" value="P:BMP signaling pathway"/>
    <property type="evidence" value="ECO:0000266"/>
    <property type="project" value="RGD"/>
</dbReference>
<dbReference type="GO" id="GO:0071773">
    <property type="term" value="P:cellular response to BMP stimulus"/>
    <property type="evidence" value="ECO:0000266"/>
    <property type="project" value="RGD"/>
</dbReference>
<dbReference type="GO" id="GO:0006879">
    <property type="term" value="P:intracellular iron ion homeostasis"/>
    <property type="evidence" value="ECO:0000266"/>
    <property type="project" value="RGD"/>
</dbReference>
<dbReference type="GO" id="GO:0060586">
    <property type="term" value="P:multicellular organismal-level iron ion homeostasis"/>
    <property type="evidence" value="ECO:0000266"/>
    <property type="project" value="RGD"/>
</dbReference>
<dbReference type="GO" id="GO:0030514">
    <property type="term" value="P:negative regulation of BMP signaling pathway"/>
    <property type="evidence" value="ECO:0000266"/>
    <property type="project" value="RGD"/>
</dbReference>
<dbReference type="GO" id="GO:0000122">
    <property type="term" value="P:negative regulation of transcription by RNA polymerase II"/>
    <property type="evidence" value="ECO:0000266"/>
    <property type="project" value="RGD"/>
</dbReference>
<dbReference type="GO" id="GO:0045944">
    <property type="term" value="P:positive regulation of transcription by RNA polymerase II"/>
    <property type="evidence" value="ECO:0000266"/>
    <property type="project" value="RGD"/>
</dbReference>
<dbReference type="GO" id="GO:0016540">
    <property type="term" value="P:protein autoprocessing"/>
    <property type="evidence" value="ECO:0000266"/>
    <property type="project" value="RGD"/>
</dbReference>
<dbReference type="GO" id="GO:0006366">
    <property type="term" value="P:transcription by RNA polymerase II"/>
    <property type="evidence" value="ECO:0000266"/>
    <property type="project" value="RGD"/>
</dbReference>
<dbReference type="FunFam" id="3.40.1000.10:FF:000003">
    <property type="entry name" value="hemojuvelin isoform X1"/>
    <property type="match status" value="1"/>
</dbReference>
<dbReference type="Gene3D" id="3.40.1000.10">
    <property type="entry name" value="Mog1/PsbP, alpha/beta/alpha sandwich"/>
    <property type="match status" value="1"/>
</dbReference>
<dbReference type="InterPro" id="IPR040287">
    <property type="entry name" value="RGM"/>
</dbReference>
<dbReference type="InterPro" id="IPR009496">
    <property type="entry name" value="RGM_C"/>
</dbReference>
<dbReference type="InterPro" id="IPR010536">
    <property type="entry name" value="RGM_N"/>
</dbReference>
<dbReference type="PANTHER" id="PTHR31428:SF3">
    <property type="entry name" value="HEMOJUVELIN"/>
    <property type="match status" value="1"/>
</dbReference>
<dbReference type="PANTHER" id="PTHR31428">
    <property type="entry name" value="RGM DOMAIN FAMILY MEMBER DRAG-1"/>
    <property type="match status" value="1"/>
</dbReference>
<dbReference type="Pfam" id="PF06534">
    <property type="entry name" value="RGM_C"/>
    <property type="match status" value="1"/>
</dbReference>
<dbReference type="Pfam" id="PF06535">
    <property type="entry name" value="RGM_N"/>
    <property type="match status" value="1"/>
</dbReference>
<accession>Q8N7M5</accession>